<dbReference type="EC" id="4.1.1.11" evidence="1"/>
<dbReference type="EMBL" id="CP000792">
    <property type="protein sequence ID" value="EAT98154.1"/>
    <property type="molecule type" value="Genomic_DNA"/>
</dbReference>
<dbReference type="RefSeq" id="WP_012140546.1">
    <property type="nucleotide sequence ID" value="NC_009802.2"/>
</dbReference>
<dbReference type="SMR" id="A7ZFX6"/>
<dbReference type="STRING" id="360104.CCC13826_1739"/>
<dbReference type="KEGG" id="cco:CCC13826_1739"/>
<dbReference type="eggNOG" id="COG0853">
    <property type="taxonomic scope" value="Bacteria"/>
</dbReference>
<dbReference type="HOGENOM" id="CLU_115305_2_0_7"/>
<dbReference type="OrthoDB" id="9803983at2"/>
<dbReference type="UniPathway" id="UPA00028">
    <property type="reaction ID" value="UER00002"/>
</dbReference>
<dbReference type="Proteomes" id="UP000001121">
    <property type="component" value="Chromosome"/>
</dbReference>
<dbReference type="GO" id="GO:0005829">
    <property type="term" value="C:cytosol"/>
    <property type="evidence" value="ECO:0007669"/>
    <property type="project" value="TreeGrafter"/>
</dbReference>
<dbReference type="GO" id="GO:0004068">
    <property type="term" value="F:aspartate 1-decarboxylase activity"/>
    <property type="evidence" value="ECO:0007669"/>
    <property type="project" value="UniProtKB-UniRule"/>
</dbReference>
<dbReference type="GO" id="GO:0006523">
    <property type="term" value="P:alanine biosynthetic process"/>
    <property type="evidence" value="ECO:0007669"/>
    <property type="project" value="InterPro"/>
</dbReference>
<dbReference type="GO" id="GO:0015940">
    <property type="term" value="P:pantothenate biosynthetic process"/>
    <property type="evidence" value="ECO:0007669"/>
    <property type="project" value="UniProtKB-UniRule"/>
</dbReference>
<dbReference type="CDD" id="cd06919">
    <property type="entry name" value="Asp_decarbox"/>
    <property type="match status" value="1"/>
</dbReference>
<dbReference type="Gene3D" id="2.40.40.20">
    <property type="match status" value="1"/>
</dbReference>
<dbReference type="HAMAP" id="MF_00446">
    <property type="entry name" value="PanD"/>
    <property type="match status" value="1"/>
</dbReference>
<dbReference type="InterPro" id="IPR009010">
    <property type="entry name" value="Asp_de-COase-like_dom_sf"/>
</dbReference>
<dbReference type="InterPro" id="IPR003190">
    <property type="entry name" value="Asp_decarbox"/>
</dbReference>
<dbReference type="NCBIfam" id="TIGR00223">
    <property type="entry name" value="panD"/>
    <property type="match status" value="1"/>
</dbReference>
<dbReference type="PANTHER" id="PTHR21012">
    <property type="entry name" value="ASPARTATE 1-DECARBOXYLASE"/>
    <property type="match status" value="1"/>
</dbReference>
<dbReference type="PANTHER" id="PTHR21012:SF0">
    <property type="entry name" value="ASPARTATE 1-DECARBOXYLASE"/>
    <property type="match status" value="1"/>
</dbReference>
<dbReference type="Pfam" id="PF02261">
    <property type="entry name" value="Asp_decarbox"/>
    <property type="match status" value="1"/>
</dbReference>
<dbReference type="PIRSF" id="PIRSF006246">
    <property type="entry name" value="Asp_decarbox"/>
    <property type="match status" value="1"/>
</dbReference>
<dbReference type="SUPFAM" id="SSF50692">
    <property type="entry name" value="ADC-like"/>
    <property type="match status" value="1"/>
</dbReference>
<protein>
    <recommendedName>
        <fullName evidence="1">Aspartate 1-decarboxylase</fullName>
        <ecNumber evidence="1">4.1.1.11</ecNumber>
    </recommendedName>
    <alternativeName>
        <fullName evidence="1">Aspartate alpha-decarboxylase</fullName>
    </alternativeName>
    <component>
        <recommendedName>
            <fullName evidence="1">Aspartate 1-decarboxylase beta chain</fullName>
        </recommendedName>
    </component>
    <component>
        <recommendedName>
            <fullName evidence="1">Aspartate 1-decarboxylase alpha chain</fullName>
        </recommendedName>
    </component>
</protein>
<accession>A7ZFX6</accession>
<evidence type="ECO:0000255" key="1">
    <source>
        <dbReference type="HAMAP-Rule" id="MF_00446"/>
    </source>
</evidence>
<sequence>MNIEILASKIHRAVVTDANLNYVGSISIGEELIKAANLIENQKVEILDINNGERFATYVIKGKKGEICLNGAAARKVCVGDVVIIVAYASMKFKKAKKFKPTIVHVNNKNEIIKE</sequence>
<comment type="function">
    <text evidence="1">Catalyzes the pyruvoyl-dependent decarboxylation of aspartate to produce beta-alanine.</text>
</comment>
<comment type="catalytic activity">
    <reaction evidence="1">
        <text>L-aspartate + H(+) = beta-alanine + CO2</text>
        <dbReference type="Rhea" id="RHEA:19497"/>
        <dbReference type="ChEBI" id="CHEBI:15378"/>
        <dbReference type="ChEBI" id="CHEBI:16526"/>
        <dbReference type="ChEBI" id="CHEBI:29991"/>
        <dbReference type="ChEBI" id="CHEBI:57966"/>
        <dbReference type="EC" id="4.1.1.11"/>
    </reaction>
</comment>
<comment type="cofactor">
    <cofactor evidence="1">
        <name>pyruvate</name>
        <dbReference type="ChEBI" id="CHEBI:15361"/>
    </cofactor>
    <text evidence="1">Binds 1 pyruvoyl group covalently per subunit.</text>
</comment>
<comment type="pathway">
    <text evidence="1">Cofactor biosynthesis; (R)-pantothenate biosynthesis; beta-alanine from L-aspartate: step 1/1.</text>
</comment>
<comment type="subunit">
    <text evidence="1">Heterooctamer of four alpha and four beta subunits.</text>
</comment>
<comment type="subcellular location">
    <subcellularLocation>
        <location evidence="1">Cytoplasm</location>
    </subcellularLocation>
</comment>
<comment type="PTM">
    <text evidence="1">Is synthesized initially as an inactive proenzyme, which is activated by self-cleavage at a specific serine bond to produce a beta-subunit with a hydroxyl group at its C-terminus and an alpha-subunit with a pyruvoyl group at its N-terminus.</text>
</comment>
<comment type="similarity">
    <text evidence="1">Belongs to the PanD family.</text>
</comment>
<keyword id="KW-0068">Autocatalytic cleavage</keyword>
<keyword id="KW-0963">Cytoplasm</keyword>
<keyword id="KW-0210">Decarboxylase</keyword>
<keyword id="KW-0456">Lyase</keyword>
<keyword id="KW-0566">Pantothenate biosynthesis</keyword>
<keyword id="KW-0670">Pyruvate</keyword>
<keyword id="KW-0704">Schiff base</keyword>
<keyword id="KW-0865">Zymogen</keyword>
<name>PAND_CAMC1</name>
<feature type="chain" id="PRO_1000026166" description="Aspartate 1-decarboxylase beta chain" evidence="1">
    <location>
        <begin position="1"/>
        <end position="24"/>
    </location>
</feature>
<feature type="chain" id="PRO_0000316057" description="Aspartate 1-decarboxylase alpha chain" evidence="1">
    <location>
        <begin position="25"/>
        <end position="115"/>
    </location>
</feature>
<feature type="active site" description="Schiff-base intermediate with substrate; via pyruvic acid" evidence="1">
    <location>
        <position position="25"/>
    </location>
</feature>
<feature type="active site" description="Proton donor" evidence="1">
    <location>
        <position position="58"/>
    </location>
</feature>
<feature type="binding site" evidence="1">
    <location>
        <position position="57"/>
    </location>
    <ligand>
        <name>substrate</name>
    </ligand>
</feature>
<feature type="binding site" evidence="1">
    <location>
        <begin position="71"/>
        <end position="73"/>
    </location>
    <ligand>
        <name>substrate</name>
    </ligand>
</feature>
<feature type="modified residue" description="Pyruvic acid (Ser)" evidence="1">
    <location>
        <position position="25"/>
    </location>
</feature>
<organism>
    <name type="scientific">Campylobacter concisus (strain 13826)</name>
    <dbReference type="NCBI Taxonomy" id="360104"/>
    <lineage>
        <taxon>Bacteria</taxon>
        <taxon>Pseudomonadati</taxon>
        <taxon>Campylobacterota</taxon>
        <taxon>Epsilonproteobacteria</taxon>
        <taxon>Campylobacterales</taxon>
        <taxon>Campylobacteraceae</taxon>
        <taxon>Campylobacter</taxon>
    </lineage>
</organism>
<proteinExistence type="inferred from homology"/>
<reference key="1">
    <citation type="submission" date="2007-10" db="EMBL/GenBank/DDBJ databases">
        <title>Genome sequence of Campylobacter concisus 13826 isolated from human feces.</title>
        <authorList>
            <person name="Fouts D.E."/>
            <person name="Mongodin E.F."/>
            <person name="Puiu D."/>
            <person name="Sebastian Y."/>
            <person name="Miller W.G."/>
            <person name="Mandrell R.E."/>
            <person name="On S."/>
            <person name="Nelson K.E."/>
        </authorList>
    </citation>
    <scope>NUCLEOTIDE SEQUENCE [LARGE SCALE GENOMIC DNA]</scope>
    <source>
        <strain>13826</strain>
    </source>
</reference>
<gene>
    <name evidence="1" type="primary">panD</name>
    <name type="ordered locus">Ccon26_18490</name>
    <name type="ORF">CCC13826_1739</name>
</gene>